<gene>
    <name evidence="1" type="primary">apeB</name>
    <name type="ordered locus">PputGB1_1322</name>
</gene>
<reference key="1">
    <citation type="submission" date="2008-01" db="EMBL/GenBank/DDBJ databases">
        <title>Complete sequence of Pseudomonas putida GB-1.</title>
        <authorList>
            <consortium name="US DOE Joint Genome Institute"/>
            <person name="Copeland A."/>
            <person name="Lucas S."/>
            <person name="Lapidus A."/>
            <person name="Barry K."/>
            <person name="Glavina del Rio T."/>
            <person name="Dalin E."/>
            <person name="Tice H."/>
            <person name="Pitluck S."/>
            <person name="Bruce D."/>
            <person name="Goodwin L."/>
            <person name="Chertkov O."/>
            <person name="Brettin T."/>
            <person name="Detter J.C."/>
            <person name="Han C."/>
            <person name="Kuske C.R."/>
            <person name="Schmutz J."/>
            <person name="Larimer F."/>
            <person name="Land M."/>
            <person name="Hauser L."/>
            <person name="Kyrpides N."/>
            <person name="Kim E."/>
            <person name="McCarthy J.K."/>
            <person name="Richardson P."/>
        </authorList>
    </citation>
    <scope>NUCLEOTIDE SEQUENCE [LARGE SCALE GENOMIC DNA]</scope>
    <source>
        <strain>GB-1</strain>
    </source>
</reference>
<keyword id="KW-0031">Aminopeptidase</keyword>
<keyword id="KW-0378">Hydrolase</keyword>
<keyword id="KW-0479">Metal-binding</keyword>
<keyword id="KW-0482">Metalloprotease</keyword>
<keyword id="KW-0645">Protease</keyword>
<keyword id="KW-0862">Zinc</keyword>
<dbReference type="EC" id="3.4.11.-" evidence="1"/>
<dbReference type="EMBL" id="CP000926">
    <property type="protein sequence ID" value="ABY97229.1"/>
    <property type="molecule type" value="Genomic_DNA"/>
</dbReference>
<dbReference type="RefSeq" id="WP_012271003.1">
    <property type="nucleotide sequence ID" value="NC_010322.1"/>
</dbReference>
<dbReference type="SMR" id="B0KTU0"/>
<dbReference type="KEGG" id="ppg:PputGB1_1322"/>
<dbReference type="eggNOG" id="COG1362">
    <property type="taxonomic scope" value="Bacteria"/>
</dbReference>
<dbReference type="HOGENOM" id="CLU_019532_2_0_6"/>
<dbReference type="Proteomes" id="UP000002157">
    <property type="component" value="Chromosome"/>
</dbReference>
<dbReference type="GO" id="GO:0005737">
    <property type="term" value="C:cytoplasm"/>
    <property type="evidence" value="ECO:0007669"/>
    <property type="project" value="UniProtKB-ARBA"/>
</dbReference>
<dbReference type="GO" id="GO:0004177">
    <property type="term" value="F:aminopeptidase activity"/>
    <property type="evidence" value="ECO:0007669"/>
    <property type="project" value="UniProtKB-UniRule"/>
</dbReference>
<dbReference type="GO" id="GO:0008237">
    <property type="term" value="F:metallopeptidase activity"/>
    <property type="evidence" value="ECO:0007669"/>
    <property type="project" value="UniProtKB-UniRule"/>
</dbReference>
<dbReference type="GO" id="GO:0008270">
    <property type="term" value="F:zinc ion binding"/>
    <property type="evidence" value="ECO:0007669"/>
    <property type="project" value="UniProtKB-UniRule"/>
</dbReference>
<dbReference type="GO" id="GO:0006508">
    <property type="term" value="P:proteolysis"/>
    <property type="evidence" value="ECO:0007669"/>
    <property type="project" value="UniProtKB-UniRule"/>
</dbReference>
<dbReference type="CDD" id="cd05658">
    <property type="entry name" value="M18_DAP"/>
    <property type="match status" value="1"/>
</dbReference>
<dbReference type="FunFam" id="2.30.250.10:FF:000003">
    <property type="entry name" value="Probable M18 family aminopeptidase 2"/>
    <property type="match status" value="1"/>
</dbReference>
<dbReference type="Gene3D" id="2.30.250.10">
    <property type="entry name" value="Aminopeptidase i, Domain 2"/>
    <property type="match status" value="1"/>
</dbReference>
<dbReference type="Gene3D" id="3.40.630.10">
    <property type="entry name" value="Zn peptidases"/>
    <property type="match status" value="1"/>
</dbReference>
<dbReference type="HAMAP" id="MF_00467">
    <property type="entry name" value="Aminopeptidase_M18_2"/>
    <property type="match status" value="1"/>
</dbReference>
<dbReference type="InterPro" id="IPR022984">
    <property type="entry name" value="M18_aminopeptidase_2"/>
</dbReference>
<dbReference type="InterPro" id="IPR001948">
    <property type="entry name" value="Peptidase_M18"/>
</dbReference>
<dbReference type="InterPro" id="IPR023358">
    <property type="entry name" value="Peptidase_M18_dom2"/>
</dbReference>
<dbReference type="NCBIfam" id="NF002759">
    <property type="entry name" value="PRK02813.1"/>
    <property type="match status" value="1"/>
</dbReference>
<dbReference type="PANTHER" id="PTHR28570">
    <property type="entry name" value="ASPARTYL AMINOPEPTIDASE"/>
    <property type="match status" value="1"/>
</dbReference>
<dbReference type="PANTHER" id="PTHR28570:SF3">
    <property type="entry name" value="ASPARTYL AMINOPEPTIDASE"/>
    <property type="match status" value="1"/>
</dbReference>
<dbReference type="Pfam" id="PF02127">
    <property type="entry name" value="Peptidase_M18"/>
    <property type="match status" value="1"/>
</dbReference>
<dbReference type="PRINTS" id="PR00932">
    <property type="entry name" value="AMINO1PTASE"/>
</dbReference>
<dbReference type="SUPFAM" id="SSF101821">
    <property type="entry name" value="Aminopeptidase/glucanase lid domain"/>
    <property type="match status" value="1"/>
</dbReference>
<dbReference type="SUPFAM" id="SSF53187">
    <property type="entry name" value="Zn-dependent exopeptidases"/>
    <property type="match status" value="1"/>
</dbReference>
<comment type="cofactor">
    <cofactor evidence="1">
        <name>Zn(2+)</name>
        <dbReference type="ChEBI" id="CHEBI:29105"/>
    </cofactor>
</comment>
<comment type="similarity">
    <text evidence="1">Belongs to the peptidase M18 family.</text>
</comment>
<feature type="chain" id="PRO_1000081180" description="Probable M18 family aminopeptidase 2">
    <location>
        <begin position="1"/>
        <end position="429"/>
    </location>
</feature>
<feature type="binding site" evidence="1">
    <location>
        <position position="82"/>
    </location>
    <ligand>
        <name>Zn(2+)</name>
        <dbReference type="ChEBI" id="CHEBI:29105"/>
    </ligand>
</feature>
<feature type="binding site" evidence="1">
    <location>
        <position position="156"/>
    </location>
    <ligand>
        <name>Zn(2+)</name>
        <dbReference type="ChEBI" id="CHEBI:29105"/>
    </ligand>
</feature>
<feature type="binding site" evidence="1">
    <location>
        <position position="401"/>
    </location>
    <ligand>
        <name>Zn(2+)</name>
        <dbReference type="ChEBI" id="CHEBI:29105"/>
    </ligand>
</feature>
<evidence type="ECO:0000255" key="1">
    <source>
        <dbReference type="HAMAP-Rule" id="MF_00467"/>
    </source>
</evidence>
<organism>
    <name type="scientific">Pseudomonas putida (strain GB-1)</name>
    <dbReference type="NCBI Taxonomy" id="76869"/>
    <lineage>
        <taxon>Bacteria</taxon>
        <taxon>Pseudomonadati</taxon>
        <taxon>Pseudomonadota</taxon>
        <taxon>Gammaproteobacteria</taxon>
        <taxon>Pseudomonadales</taxon>
        <taxon>Pseudomonadaceae</taxon>
        <taxon>Pseudomonas</taxon>
    </lineage>
</organism>
<accession>B0KTU0</accession>
<sequence>MRDALNTGLIDFLKASPTPFHATASLAQRLEAAGYQRLDERDSWATVPGGRYYVTRNDSSIIAIKLGKQAPLLNGIRMVGAHTDSPCLRVKPQPELQRQGFLQLGVEVYGGALLAPWFDRDLSLAGRVTYRRDGKVESQLIDFKLPIAIIPNLAIHLNRTANEGWAINPQNELPPILAQVAGDERIDFRALLTEQLAREHELIADVVLDYELSFYDTQDAALIGLHGDFIAGARLDNLLSCYAGLQALLAADSDETCVLVCNDHEEVGSCSACGADGPMLEQTLQRLLPDGDSYVRTVQRSLMVSADNAHGVHPNYADKHDGNHGPKLNAGPVIKVNNNQRYATNSETAGFFRHLCMAEEVPVQSFVVRSDMGCGSTIGPITASHLGVRTVDIGLPTFAMHSIRELCGSHDLAHLVKVLTAFYRSRELP</sequence>
<name>APEB_PSEPG</name>
<proteinExistence type="inferred from homology"/>
<protein>
    <recommendedName>
        <fullName evidence="1">Probable M18 family aminopeptidase 2</fullName>
        <ecNumber evidence="1">3.4.11.-</ecNumber>
    </recommendedName>
</protein>